<reference key="1">
    <citation type="journal article" date="1994" name="Gene">
        <title>Sequence of the DNA ligase-encoding gene from Thermus scotoductus and conserved motifs in DNA ligases.</title>
        <authorList>
            <person name="Jonsson Z.O."/>
            <person name="Thorbjarnardottir S.H."/>
            <person name="Eggertsson G."/>
            <person name="Palsdottir A."/>
        </authorList>
    </citation>
    <scope>NUCLEOTIDE SEQUENCE [GENOMIC DNA]</scope>
    <source>
        <strain>ATCC 51532 / DSM 8553 / BCRC 17424 / JCM 11601 / NBRC 110748 / NCIMB 13336 / SE-1</strain>
    </source>
</reference>
<organism>
    <name type="scientific">Thermus scotoductus</name>
    <dbReference type="NCBI Taxonomy" id="37636"/>
    <lineage>
        <taxon>Bacteria</taxon>
        <taxon>Thermotogati</taxon>
        <taxon>Deinococcota</taxon>
        <taxon>Deinococci</taxon>
        <taxon>Thermales</taxon>
        <taxon>Thermaceae</taxon>
        <taxon>Thermus</taxon>
    </lineage>
</organism>
<gene>
    <name evidence="1" type="primary">ligA</name>
    <name type="synonym">lig</name>
</gene>
<proteinExistence type="evidence at protein level"/>
<keyword id="KW-0227">DNA damage</keyword>
<keyword id="KW-0234">DNA repair</keyword>
<keyword id="KW-0235">DNA replication</keyword>
<keyword id="KW-0436">Ligase</keyword>
<keyword id="KW-0460">Magnesium</keyword>
<keyword id="KW-0464">Manganese</keyword>
<keyword id="KW-0479">Metal-binding</keyword>
<keyword id="KW-0520">NAD</keyword>
<keyword id="KW-0862">Zinc</keyword>
<protein>
    <recommendedName>
        <fullName evidence="1">DNA ligase</fullName>
        <ecNumber evidence="1">6.5.1.2</ecNumber>
    </recommendedName>
    <alternativeName>
        <fullName evidence="1">Polydeoxyribonucleotide synthase [NAD(+)]</fullName>
    </alternativeName>
</protein>
<feature type="chain" id="PRO_0000161773" description="DNA ligase">
    <location>
        <begin position="1"/>
        <end position="674"/>
    </location>
</feature>
<feature type="domain" description="BRCT" evidence="1">
    <location>
        <begin position="586"/>
        <end position="674"/>
    </location>
</feature>
<feature type="active site" description="N6-AMP-lysine intermediate" evidence="1">
    <location>
        <position position="118"/>
    </location>
</feature>
<feature type="binding site" evidence="1">
    <location>
        <begin position="34"/>
        <end position="38"/>
    </location>
    <ligand>
        <name>NAD(+)</name>
        <dbReference type="ChEBI" id="CHEBI:57540"/>
    </ligand>
</feature>
<feature type="binding site" evidence="1">
    <location>
        <begin position="84"/>
        <end position="85"/>
    </location>
    <ligand>
        <name>NAD(+)</name>
        <dbReference type="ChEBI" id="CHEBI:57540"/>
    </ligand>
</feature>
<feature type="binding site" evidence="1">
    <location>
        <position position="116"/>
    </location>
    <ligand>
        <name>NAD(+)</name>
        <dbReference type="ChEBI" id="CHEBI:57540"/>
    </ligand>
</feature>
<feature type="binding site" evidence="1">
    <location>
        <position position="139"/>
    </location>
    <ligand>
        <name>NAD(+)</name>
        <dbReference type="ChEBI" id="CHEBI:57540"/>
    </ligand>
</feature>
<feature type="binding site" evidence="1">
    <location>
        <position position="174"/>
    </location>
    <ligand>
        <name>NAD(+)</name>
        <dbReference type="ChEBI" id="CHEBI:57540"/>
    </ligand>
</feature>
<feature type="binding site" evidence="1">
    <location>
        <position position="291"/>
    </location>
    <ligand>
        <name>NAD(+)</name>
        <dbReference type="ChEBI" id="CHEBI:57540"/>
    </ligand>
</feature>
<feature type="binding site" evidence="1">
    <location>
        <position position="315"/>
    </location>
    <ligand>
        <name>NAD(+)</name>
        <dbReference type="ChEBI" id="CHEBI:57540"/>
    </ligand>
</feature>
<feature type="binding site" evidence="1">
    <location>
        <position position="409"/>
    </location>
    <ligand>
        <name>Zn(2+)</name>
        <dbReference type="ChEBI" id="CHEBI:29105"/>
    </ligand>
</feature>
<feature type="binding site" evidence="1">
    <location>
        <position position="412"/>
    </location>
    <ligand>
        <name>Zn(2+)</name>
        <dbReference type="ChEBI" id="CHEBI:29105"/>
    </ligand>
</feature>
<feature type="binding site" evidence="1">
    <location>
        <position position="425"/>
    </location>
    <ligand>
        <name>Zn(2+)</name>
        <dbReference type="ChEBI" id="CHEBI:29105"/>
    </ligand>
</feature>
<feature type="binding site" evidence="1">
    <location>
        <position position="430"/>
    </location>
    <ligand>
        <name>Zn(2+)</name>
        <dbReference type="ChEBI" id="CHEBI:29105"/>
    </ligand>
</feature>
<dbReference type="EC" id="6.5.1.2" evidence="1"/>
<dbReference type="EMBL" id="Z29528">
    <property type="protein sequence ID" value="CAA82645.1"/>
    <property type="molecule type" value="Genomic_DNA"/>
</dbReference>
<dbReference type="PIR" id="S52240">
    <property type="entry name" value="S52240"/>
</dbReference>
<dbReference type="SMR" id="P49422"/>
<dbReference type="GO" id="GO:0005829">
    <property type="term" value="C:cytosol"/>
    <property type="evidence" value="ECO:0007669"/>
    <property type="project" value="TreeGrafter"/>
</dbReference>
<dbReference type="GO" id="GO:0003677">
    <property type="term" value="F:DNA binding"/>
    <property type="evidence" value="ECO:0007669"/>
    <property type="project" value="InterPro"/>
</dbReference>
<dbReference type="GO" id="GO:0003911">
    <property type="term" value="F:DNA ligase (NAD+) activity"/>
    <property type="evidence" value="ECO:0007669"/>
    <property type="project" value="UniProtKB-UniRule"/>
</dbReference>
<dbReference type="GO" id="GO:0046872">
    <property type="term" value="F:metal ion binding"/>
    <property type="evidence" value="ECO:0007669"/>
    <property type="project" value="UniProtKB-KW"/>
</dbReference>
<dbReference type="GO" id="GO:0006281">
    <property type="term" value="P:DNA repair"/>
    <property type="evidence" value="ECO:0007669"/>
    <property type="project" value="UniProtKB-KW"/>
</dbReference>
<dbReference type="GO" id="GO:0006260">
    <property type="term" value="P:DNA replication"/>
    <property type="evidence" value="ECO:0007669"/>
    <property type="project" value="UniProtKB-KW"/>
</dbReference>
<dbReference type="CDD" id="cd17748">
    <property type="entry name" value="BRCT_DNA_ligase_like"/>
    <property type="match status" value="1"/>
</dbReference>
<dbReference type="CDD" id="cd00114">
    <property type="entry name" value="LIGANc"/>
    <property type="match status" value="1"/>
</dbReference>
<dbReference type="FunFam" id="1.10.150.20:FF:000006">
    <property type="entry name" value="DNA ligase"/>
    <property type="match status" value="1"/>
</dbReference>
<dbReference type="FunFam" id="1.10.150.20:FF:000007">
    <property type="entry name" value="DNA ligase"/>
    <property type="match status" value="1"/>
</dbReference>
<dbReference type="FunFam" id="1.10.287.610:FF:000002">
    <property type="entry name" value="DNA ligase"/>
    <property type="match status" value="1"/>
</dbReference>
<dbReference type="FunFam" id="2.40.50.140:FF:000012">
    <property type="entry name" value="DNA ligase"/>
    <property type="match status" value="1"/>
</dbReference>
<dbReference type="FunFam" id="3.30.470.30:FF:000001">
    <property type="entry name" value="DNA ligase"/>
    <property type="match status" value="1"/>
</dbReference>
<dbReference type="Gene3D" id="3.30.1490.70">
    <property type="match status" value="1"/>
</dbReference>
<dbReference type="Gene3D" id="6.20.10.30">
    <property type="match status" value="1"/>
</dbReference>
<dbReference type="Gene3D" id="1.10.150.20">
    <property type="entry name" value="5' to 3' exonuclease, C-terminal subdomain"/>
    <property type="match status" value="2"/>
</dbReference>
<dbReference type="Gene3D" id="3.40.50.10190">
    <property type="entry name" value="BRCT domain"/>
    <property type="match status" value="1"/>
</dbReference>
<dbReference type="Gene3D" id="3.30.470.30">
    <property type="entry name" value="DNA ligase/mRNA capping enzyme"/>
    <property type="match status" value="1"/>
</dbReference>
<dbReference type="Gene3D" id="1.10.287.610">
    <property type="entry name" value="Helix hairpin bin"/>
    <property type="match status" value="1"/>
</dbReference>
<dbReference type="Gene3D" id="2.40.50.140">
    <property type="entry name" value="Nucleic acid-binding proteins"/>
    <property type="match status" value="1"/>
</dbReference>
<dbReference type="HAMAP" id="MF_01588">
    <property type="entry name" value="DNA_ligase_A"/>
    <property type="match status" value="1"/>
</dbReference>
<dbReference type="InterPro" id="IPR001357">
    <property type="entry name" value="BRCT_dom"/>
</dbReference>
<dbReference type="InterPro" id="IPR036420">
    <property type="entry name" value="BRCT_dom_sf"/>
</dbReference>
<dbReference type="InterPro" id="IPR041663">
    <property type="entry name" value="DisA/LigA_HHH"/>
</dbReference>
<dbReference type="InterPro" id="IPR001679">
    <property type="entry name" value="DNA_ligase"/>
</dbReference>
<dbReference type="InterPro" id="IPR018239">
    <property type="entry name" value="DNA_ligase_AS"/>
</dbReference>
<dbReference type="InterPro" id="IPR033136">
    <property type="entry name" value="DNA_ligase_CS"/>
</dbReference>
<dbReference type="InterPro" id="IPR013839">
    <property type="entry name" value="DNAligase_adenylation"/>
</dbReference>
<dbReference type="InterPro" id="IPR013840">
    <property type="entry name" value="DNAligase_N"/>
</dbReference>
<dbReference type="InterPro" id="IPR003583">
    <property type="entry name" value="Hlx-hairpin-Hlx_DNA-bd_motif"/>
</dbReference>
<dbReference type="InterPro" id="IPR012340">
    <property type="entry name" value="NA-bd_OB-fold"/>
</dbReference>
<dbReference type="InterPro" id="IPR004150">
    <property type="entry name" value="NAD_DNA_ligase_OB"/>
</dbReference>
<dbReference type="InterPro" id="IPR010994">
    <property type="entry name" value="RuvA_2-like"/>
</dbReference>
<dbReference type="InterPro" id="IPR004149">
    <property type="entry name" value="Znf_DNAligase_C4"/>
</dbReference>
<dbReference type="NCBIfam" id="TIGR00575">
    <property type="entry name" value="dnlj"/>
    <property type="match status" value="1"/>
</dbReference>
<dbReference type="NCBIfam" id="NF005932">
    <property type="entry name" value="PRK07956.1"/>
    <property type="match status" value="1"/>
</dbReference>
<dbReference type="PANTHER" id="PTHR23389">
    <property type="entry name" value="CHROMOSOME TRANSMISSION FIDELITY FACTOR 18"/>
    <property type="match status" value="1"/>
</dbReference>
<dbReference type="PANTHER" id="PTHR23389:SF9">
    <property type="entry name" value="DNA LIGASE"/>
    <property type="match status" value="1"/>
</dbReference>
<dbReference type="Pfam" id="PF00533">
    <property type="entry name" value="BRCT"/>
    <property type="match status" value="1"/>
</dbReference>
<dbReference type="Pfam" id="PF01653">
    <property type="entry name" value="DNA_ligase_aden"/>
    <property type="match status" value="1"/>
</dbReference>
<dbReference type="Pfam" id="PF03120">
    <property type="entry name" value="DNA_ligase_OB"/>
    <property type="match status" value="1"/>
</dbReference>
<dbReference type="Pfam" id="PF03119">
    <property type="entry name" value="DNA_ligase_ZBD"/>
    <property type="match status" value="1"/>
</dbReference>
<dbReference type="Pfam" id="PF12826">
    <property type="entry name" value="HHH_2"/>
    <property type="match status" value="1"/>
</dbReference>
<dbReference type="Pfam" id="PF14520">
    <property type="entry name" value="HHH_5"/>
    <property type="match status" value="1"/>
</dbReference>
<dbReference type="Pfam" id="PF22745">
    <property type="entry name" value="Nlig-Ia"/>
    <property type="match status" value="1"/>
</dbReference>
<dbReference type="PIRSF" id="PIRSF001604">
    <property type="entry name" value="LigA"/>
    <property type="match status" value="1"/>
</dbReference>
<dbReference type="SMART" id="SM00292">
    <property type="entry name" value="BRCT"/>
    <property type="match status" value="1"/>
</dbReference>
<dbReference type="SMART" id="SM00278">
    <property type="entry name" value="HhH1"/>
    <property type="match status" value="4"/>
</dbReference>
<dbReference type="SMART" id="SM00532">
    <property type="entry name" value="LIGANc"/>
    <property type="match status" value="1"/>
</dbReference>
<dbReference type="SUPFAM" id="SSF52113">
    <property type="entry name" value="BRCT domain"/>
    <property type="match status" value="1"/>
</dbReference>
<dbReference type="SUPFAM" id="SSF56091">
    <property type="entry name" value="DNA ligase/mRNA capping enzyme, catalytic domain"/>
    <property type="match status" value="1"/>
</dbReference>
<dbReference type="SUPFAM" id="SSF50249">
    <property type="entry name" value="Nucleic acid-binding proteins"/>
    <property type="match status" value="1"/>
</dbReference>
<dbReference type="SUPFAM" id="SSF47781">
    <property type="entry name" value="RuvA domain 2-like"/>
    <property type="match status" value="1"/>
</dbReference>
<dbReference type="PROSITE" id="PS50172">
    <property type="entry name" value="BRCT"/>
    <property type="match status" value="1"/>
</dbReference>
<dbReference type="PROSITE" id="PS01055">
    <property type="entry name" value="DNA_LIGASE_N1"/>
    <property type="match status" value="1"/>
</dbReference>
<dbReference type="PROSITE" id="PS01056">
    <property type="entry name" value="DNA_LIGASE_N2"/>
    <property type="match status" value="1"/>
</dbReference>
<accession>P49422</accession>
<sequence>MTLEEARKRVNELRDLIRYHNYRYYVLADPEISDAEYDRLLRELKELEERFPELKSPDSPTEQVGAKPLEATFRPIRHPTRMYSLDNAFNFDELKAFEERIGRALGREGPFAYTVEHKVDGLSVNLYYEDGVLVWGATRGDGEVGEEVTQNLLTIPTIPRRVKGVPERLEVRGEVYMPIEAFLRLNEELEEKGEKIFKNPRNAAAGSLRQKDPRITARRGLRATFYALGLGLEESGLKTQLDLLHWLREKGFPVEHGFARAEGAEGVERIYQGWLKERRSLPFEADGVVVKLDELSLWRELGYTARAPRFAIAYKFPAEEKETRLLQVVFQVGRTGRVTPVGILEPVFIEGSVVSRVTLHNESYIEELDVRIGDWVLVHKAGGVIPEVLRVLKEKRTGEERPIRWPETCPECGHRLVKEGKVHRCPNPLCPAKRFEAIRHYASRKAMDIGGLGEKLIEKLLEKGLVKDVADLYRLKKEDLLGLERMGEKSAQNLLRQIEESKGRGLERLLYALGLPGVGEVLARNLAAHFGTMDRLLEASLEELLQVEEVGELTARGIYETLQDPAFRDLVRRLKEAGVVMEAKERGEEALKGLTFVITGELSRPREEVKALLRRLGAKVTDSVSRKTSYLVVGENPGSKLEKARALGVPTLTEEELYRLIEERTGKPVETLAS</sequence>
<comment type="function">
    <text evidence="1">DNA ligase that catalyzes the formation of phosphodiester linkages between 5'-phosphoryl and 3'-hydroxyl groups in double-stranded DNA using NAD as a coenzyme and as the energy source for the reaction. It is essential for DNA replication and repair of damaged DNA.</text>
</comment>
<comment type="catalytic activity">
    <reaction evidence="1">
        <text>NAD(+) + (deoxyribonucleotide)n-3'-hydroxyl + 5'-phospho-(deoxyribonucleotide)m = (deoxyribonucleotide)n+m + AMP + beta-nicotinamide D-nucleotide.</text>
        <dbReference type="EC" id="6.5.1.2"/>
    </reaction>
</comment>
<comment type="cofactor">
    <cofactor evidence="1">
        <name>Mg(2+)</name>
        <dbReference type="ChEBI" id="CHEBI:18420"/>
    </cofactor>
    <cofactor evidence="1">
        <name>Mn(2+)</name>
        <dbReference type="ChEBI" id="CHEBI:29035"/>
    </cofactor>
</comment>
<comment type="biophysicochemical properties">
    <temperatureDependence>
        <text>Thermostable.</text>
    </temperatureDependence>
</comment>
<comment type="similarity">
    <text evidence="1">Belongs to the NAD-dependent DNA ligase family. LigA subfamily.</text>
</comment>
<name>DNLJ_THESC</name>
<evidence type="ECO:0000255" key="1">
    <source>
        <dbReference type="HAMAP-Rule" id="MF_01588"/>
    </source>
</evidence>